<evidence type="ECO:0000255" key="1">
    <source>
        <dbReference type="HAMAP-Rule" id="MF_00374"/>
    </source>
</evidence>
<evidence type="ECO:0000305" key="2"/>
<organism>
    <name type="scientific">Corynebacterium glutamicum (strain ATCC 13032 / DSM 20300 / JCM 1318 / BCRC 11384 / CCUG 27702 / LMG 3730 / NBRC 12168 / NCIMB 10025 / NRRL B-2784 / 534)</name>
    <dbReference type="NCBI Taxonomy" id="196627"/>
    <lineage>
        <taxon>Bacteria</taxon>
        <taxon>Bacillati</taxon>
        <taxon>Actinomycetota</taxon>
        <taxon>Actinomycetes</taxon>
        <taxon>Mycobacteriales</taxon>
        <taxon>Corynebacteriaceae</taxon>
        <taxon>Corynebacterium</taxon>
    </lineage>
</organism>
<accession>Q8NSZ9</accession>
<protein>
    <recommendedName>
        <fullName evidence="1">Large ribosomal subunit protein uL29</fullName>
    </recommendedName>
    <alternativeName>
        <fullName evidence="2">50S ribosomal protein L29</fullName>
    </alternativeName>
</protein>
<comment type="similarity">
    <text evidence="1">Belongs to the universal ribosomal protein uL29 family.</text>
</comment>
<keyword id="KW-1185">Reference proteome</keyword>
<keyword id="KW-0687">Ribonucleoprotein</keyword>
<keyword id="KW-0689">Ribosomal protein</keyword>
<dbReference type="EMBL" id="BA000036">
    <property type="protein sequence ID" value="BAB97909.1"/>
    <property type="molecule type" value="Genomic_DNA"/>
</dbReference>
<dbReference type="EMBL" id="BX927149">
    <property type="protein sequence ID" value="CAF19225.1"/>
    <property type="molecule type" value="Genomic_DNA"/>
</dbReference>
<dbReference type="RefSeq" id="NP_599756.1">
    <property type="nucleotide sequence ID" value="NC_003450.3"/>
</dbReference>
<dbReference type="RefSeq" id="WP_003854304.1">
    <property type="nucleotide sequence ID" value="NC_006958.1"/>
</dbReference>
<dbReference type="SMR" id="Q8NSZ9"/>
<dbReference type="STRING" id="196627.cg0603"/>
<dbReference type="GeneID" id="1021518"/>
<dbReference type="KEGG" id="cgb:cg0603"/>
<dbReference type="KEGG" id="cgl:Cgl0516"/>
<dbReference type="PATRIC" id="fig|196627.13.peg.511"/>
<dbReference type="eggNOG" id="COG0255">
    <property type="taxonomic scope" value="Bacteria"/>
</dbReference>
<dbReference type="HOGENOM" id="CLU_158491_3_3_11"/>
<dbReference type="OrthoDB" id="9815192at2"/>
<dbReference type="BioCyc" id="CORYNE:G18NG-10078-MONOMER"/>
<dbReference type="Proteomes" id="UP000000582">
    <property type="component" value="Chromosome"/>
</dbReference>
<dbReference type="Proteomes" id="UP000001009">
    <property type="component" value="Chromosome"/>
</dbReference>
<dbReference type="GO" id="GO:0022625">
    <property type="term" value="C:cytosolic large ribosomal subunit"/>
    <property type="evidence" value="ECO:0007669"/>
    <property type="project" value="TreeGrafter"/>
</dbReference>
<dbReference type="GO" id="GO:0003735">
    <property type="term" value="F:structural constituent of ribosome"/>
    <property type="evidence" value="ECO:0007669"/>
    <property type="project" value="InterPro"/>
</dbReference>
<dbReference type="GO" id="GO:0006412">
    <property type="term" value="P:translation"/>
    <property type="evidence" value="ECO:0007669"/>
    <property type="project" value="UniProtKB-UniRule"/>
</dbReference>
<dbReference type="CDD" id="cd00427">
    <property type="entry name" value="Ribosomal_L29_HIP"/>
    <property type="match status" value="1"/>
</dbReference>
<dbReference type="FunFam" id="1.10.287.310:FF:000001">
    <property type="entry name" value="50S ribosomal protein L29"/>
    <property type="match status" value="1"/>
</dbReference>
<dbReference type="Gene3D" id="1.10.287.310">
    <property type="match status" value="1"/>
</dbReference>
<dbReference type="HAMAP" id="MF_00374">
    <property type="entry name" value="Ribosomal_uL29"/>
    <property type="match status" value="1"/>
</dbReference>
<dbReference type="InterPro" id="IPR050063">
    <property type="entry name" value="Ribosomal_protein_uL29"/>
</dbReference>
<dbReference type="InterPro" id="IPR001854">
    <property type="entry name" value="Ribosomal_uL29"/>
</dbReference>
<dbReference type="InterPro" id="IPR018254">
    <property type="entry name" value="Ribosomal_uL29_CS"/>
</dbReference>
<dbReference type="InterPro" id="IPR036049">
    <property type="entry name" value="Ribosomal_uL29_sf"/>
</dbReference>
<dbReference type="NCBIfam" id="TIGR00012">
    <property type="entry name" value="L29"/>
    <property type="match status" value="1"/>
</dbReference>
<dbReference type="PANTHER" id="PTHR10916">
    <property type="entry name" value="60S RIBOSOMAL PROTEIN L35/50S RIBOSOMAL PROTEIN L29"/>
    <property type="match status" value="1"/>
</dbReference>
<dbReference type="PANTHER" id="PTHR10916:SF0">
    <property type="entry name" value="LARGE RIBOSOMAL SUBUNIT PROTEIN UL29C"/>
    <property type="match status" value="1"/>
</dbReference>
<dbReference type="Pfam" id="PF00831">
    <property type="entry name" value="Ribosomal_L29"/>
    <property type="match status" value="1"/>
</dbReference>
<dbReference type="SUPFAM" id="SSF46561">
    <property type="entry name" value="Ribosomal protein L29 (L29p)"/>
    <property type="match status" value="1"/>
</dbReference>
<dbReference type="PROSITE" id="PS00579">
    <property type="entry name" value="RIBOSOMAL_L29"/>
    <property type="match status" value="1"/>
</dbReference>
<reference key="1">
    <citation type="journal article" date="2003" name="Appl. Microbiol. Biotechnol.">
        <title>The Corynebacterium glutamicum genome: features and impacts on biotechnological processes.</title>
        <authorList>
            <person name="Ikeda M."/>
            <person name="Nakagawa S."/>
        </authorList>
    </citation>
    <scope>NUCLEOTIDE SEQUENCE [LARGE SCALE GENOMIC DNA]</scope>
    <source>
        <strain>ATCC 13032 / DSM 20300 / JCM 1318 / BCRC 11384 / CCUG 27702 / LMG 3730 / NBRC 12168 / NCIMB 10025 / NRRL B-2784 / 534</strain>
    </source>
</reference>
<reference key="2">
    <citation type="journal article" date="2003" name="J. Biotechnol.">
        <title>The complete Corynebacterium glutamicum ATCC 13032 genome sequence and its impact on the production of L-aspartate-derived amino acids and vitamins.</title>
        <authorList>
            <person name="Kalinowski J."/>
            <person name="Bathe B."/>
            <person name="Bartels D."/>
            <person name="Bischoff N."/>
            <person name="Bott M."/>
            <person name="Burkovski A."/>
            <person name="Dusch N."/>
            <person name="Eggeling L."/>
            <person name="Eikmanns B.J."/>
            <person name="Gaigalat L."/>
            <person name="Goesmann A."/>
            <person name="Hartmann M."/>
            <person name="Huthmacher K."/>
            <person name="Kraemer R."/>
            <person name="Linke B."/>
            <person name="McHardy A.C."/>
            <person name="Meyer F."/>
            <person name="Moeckel B."/>
            <person name="Pfefferle W."/>
            <person name="Puehler A."/>
            <person name="Rey D.A."/>
            <person name="Rueckert C."/>
            <person name="Rupp O."/>
            <person name="Sahm H."/>
            <person name="Wendisch V.F."/>
            <person name="Wiegraebe I."/>
            <person name="Tauch A."/>
        </authorList>
    </citation>
    <scope>NUCLEOTIDE SEQUENCE [LARGE SCALE GENOMIC DNA]</scope>
    <source>
        <strain>ATCC 13032 / DSM 20300 / JCM 1318 / BCRC 11384 / CCUG 27702 / LMG 3730 / NBRC 12168 / NCIMB 10025 / NRRL B-2784 / 534</strain>
    </source>
</reference>
<proteinExistence type="inferred from homology"/>
<gene>
    <name evidence="1" type="primary">rpmC</name>
    <name type="ordered locus">Cgl0516</name>
    <name type="ordered locus">cg0603</name>
</gene>
<name>RL29_CORGL</name>
<feature type="chain" id="PRO_0000130381" description="Large ribosomal subunit protein uL29">
    <location>
        <begin position="1"/>
        <end position="76"/>
    </location>
</feature>
<sequence length="76" mass="8765">MAIGTPAHEFRELNEEELVTRLNEAKEELFNLRFQLATGQLTNNRRLRTVKRDIARIYTVIRERELGLSVVPGAEA</sequence>